<feature type="transit peptide" description="Mitochondrion" evidence="1">
    <location>
        <begin position="1"/>
        <end status="unknown"/>
    </location>
</feature>
<feature type="chain" id="PRO_0000020865" description="Cruciform cutting endonuclease 1, mitochondrial">
    <location>
        <begin status="unknown"/>
        <end position="258"/>
    </location>
</feature>
<feature type="domain" description="SAP" evidence="2">
    <location>
        <begin position="1"/>
        <end position="35"/>
    </location>
</feature>
<feature type="binding site">
    <location>
        <position position="46"/>
    </location>
    <ligand>
        <name>Mg(2+)</name>
        <dbReference type="ChEBI" id="CHEBI:18420"/>
    </ligand>
</feature>
<feature type="binding site">
    <location>
        <position position="230"/>
    </location>
    <ligand>
        <name>Mg(2+)</name>
        <dbReference type="ChEBI" id="CHEBI:18420"/>
    </ligand>
</feature>
<feature type="helix" evidence="5">
    <location>
        <begin position="6"/>
        <end position="15"/>
    </location>
</feature>
<feature type="helix" evidence="5">
    <location>
        <begin position="26"/>
        <end position="33"/>
    </location>
</feature>
<feature type="strand" evidence="5">
    <location>
        <begin position="40"/>
        <end position="47"/>
    </location>
</feature>
<feature type="strand" evidence="5">
    <location>
        <begin position="52"/>
        <end position="59"/>
    </location>
</feature>
<feature type="strand" evidence="5">
    <location>
        <begin position="65"/>
        <end position="73"/>
    </location>
</feature>
<feature type="helix" evidence="5">
    <location>
        <begin position="91"/>
        <end position="109"/>
    </location>
</feature>
<feature type="strand" evidence="5">
    <location>
        <begin position="112"/>
        <end position="118"/>
    </location>
</feature>
<feature type="turn" evidence="5">
    <location>
        <begin position="123"/>
        <end position="125"/>
    </location>
</feature>
<feature type="helix" evidence="5">
    <location>
        <begin position="128"/>
        <end position="151"/>
    </location>
</feature>
<feature type="strand" evidence="5">
    <location>
        <begin position="162"/>
        <end position="165"/>
    </location>
</feature>
<feature type="helix" evidence="5">
    <location>
        <begin position="168"/>
        <end position="179"/>
    </location>
</feature>
<feature type="helix" evidence="5">
    <location>
        <begin position="191"/>
        <end position="200"/>
    </location>
</feature>
<feature type="strand" evidence="5">
    <location>
        <begin position="203"/>
        <end position="208"/>
    </location>
</feature>
<feature type="helix" evidence="5">
    <location>
        <begin position="209"/>
        <end position="217"/>
    </location>
</feature>
<feature type="turn" evidence="5">
    <location>
        <begin position="221"/>
        <end position="223"/>
    </location>
</feature>
<feature type="helix" evidence="5">
    <location>
        <begin position="224"/>
        <end position="253"/>
    </location>
</feature>
<sequence length="258" mass="30206">MATVKLSFLQHICKLTGLSRSGRKDELLRRIVDSPIYPTSRVLGIDLGIKNFSYCFASQNEDSKVIIHNWSVENLTEKNGLDIQWTEDFQPSSMADLSIQLFNTLHEKFNPHVILMERQRYRSGIATIPEWTLRVNMLESMLYALHYAEKRNSIEQKIQYPFLLSLSPKSTYSYWASVLNTKASFSKKKSRVQMVKELIDGQKILFENEEALYKWNNGSRVEFKKDDMADSALIASGWMRWQAQLKHYRNFCKQFLKQ</sequence>
<protein>
    <recommendedName>
        <fullName>Cruciform cutting endonuclease 1, mitochondrial</fullName>
        <ecNumber evidence="4">3.1.21.10</ecNumber>
    </recommendedName>
    <alternativeName>
        <fullName>Protein ydc2</fullName>
    </alternativeName>
</protein>
<organism>
    <name type="scientific">Schizosaccharomyces pombe (strain 972 / ATCC 24843)</name>
    <name type="common">Fission yeast</name>
    <dbReference type="NCBI Taxonomy" id="284812"/>
    <lineage>
        <taxon>Eukaryota</taxon>
        <taxon>Fungi</taxon>
        <taxon>Dikarya</taxon>
        <taxon>Ascomycota</taxon>
        <taxon>Taphrinomycotina</taxon>
        <taxon>Schizosaccharomycetes</taxon>
        <taxon>Schizosaccharomycetales</taxon>
        <taxon>Schizosaccharomycetaceae</taxon>
        <taxon>Schizosaccharomyces</taxon>
    </lineage>
</organism>
<gene>
    <name type="primary">cce1</name>
    <name type="synonym">ydc2</name>
    <name type="ORF">SPAC25G10.02</name>
</gene>
<name>CCE1_SCHPO</name>
<reference key="1">
    <citation type="journal article" date="1997" name="Mol. Cell. Biol.">
        <title>Characterization of a Holliday junction-resolving enzyme from Schizosaccharomyces pombe.</title>
        <authorList>
            <person name="White M.F."/>
            <person name="Lilley D.M.J."/>
        </authorList>
    </citation>
    <scope>NUCLEOTIDE SEQUENCE [GENOMIC DNA]</scope>
    <scope>FUNCTION</scope>
    <scope>CATALYTIC ACTIVITY</scope>
    <scope>SUBUNIT</scope>
</reference>
<reference key="2">
    <citation type="journal article" date="2002" name="Nature">
        <title>The genome sequence of Schizosaccharomyces pombe.</title>
        <authorList>
            <person name="Wood V."/>
            <person name="Gwilliam R."/>
            <person name="Rajandream M.A."/>
            <person name="Lyne M.H."/>
            <person name="Lyne R."/>
            <person name="Stewart A."/>
            <person name="Sgouros J.G."/>
            <person name="Peat N."/>
            <person name="Hayles J."/>
            <person name="Baker S.G."/>
            <person name="Basham D."/>
            <person name="Bowman S."/>
            <person name="Brooks K."/>
            <person name="Brown D."/>
            <person name="Brown S."/>
            <person name="Chillingworth T."/>
            <person name="Churcher C.M."/>
            <person name="Collins M."/>
            <person name="Connor R."/>
            <person name="Cronin A."/>
            <person name="Davis P."/>
            <person name="Feltwell T."/>
            <person name="Fraser A."/>
            <person name="Gentles S."/>
            <person name="Goble A."/>
            <person name="Hamlin N."/>
            <person name="Harris D.E."/>
            <person name="Hidalgo J."/>
            <person name="Hodgson G."/>
            <person name="Holroyd S."/>
            <person name="Hornsby T."/>
            <person name="Howarth S."/>
            <person name="Huckle E.J."/>
            <person name="Hunt S."/>
            <person name="Jagels K."/>
            <person name="James K.D."/>
            <person name="Jones L."/>
            <person name="Jones M."/>
            <person name="Leather S."/>
            <person name="McDonald S."/>
            <person name="McLean J."/>
            <person name="Mooney P."/>
            <person name="Moule S."/>
            <person name="Mungall K.L."/>
            <person name="Murphy L.D."/>
            <person name="Niblett D."/>
            <person name="Odell C."/>
            <person name="Oliver K."/>
            <person name="O'Neil S."/>
            <person name="Pearson D."/>
            <person name="Quail M.A."/>
            <person name="Rabbinowitsch E."/>
            <person name="Rutherford K.M."/>
            <person name="Rutter S."/>
            <person name="Saunders D."/>
            <person name="Seeger K."/>
            <person name="Sharp S."/>
            <person name="Skelton J."/>
            <person name="Simmonds M.N."/>
            <person name="Squares R."/>
            <person name="Squares S."/>
            <person name="Stevens K."/>
            <person name="Taylor K."/>
            <person name="Taylor R.G."/>
            <person name="Tivey A."/>
            <person name="Walsh S.V."/>
            <person name="Warren T."/>
            <person name="Whitehead S."/>
            <person name="Woodward J.R."/>
            <person name="Volckaert G."/>
            <person name="Aert R."/>
            <person name="Robben J."/>
            <person name="Grymonprez B."/>
            <person name="Weltjens I."/>
            <person name="Vanstreels E."/>
            <person name="Rieger M."/>
            <person name="Schaefer M."/>
            <person name="Mueller-Auer S."/>
            <person name="Gabel C."/>
            <person name="Fuchs M."/>
            <person name="Duesterhoeft A."/>
            <person name="Fritzc C."/>
            <person name="Holzer E."/>
            <person name="Moestl D."/>
            <person name="Hilbert H."/>
            <person name="Borzym K."/>
            <person name="Langer I."/>
            <person name="Beck A."/>
            <person name="Lehrach H."/>
            <person name="Reinhardt R."/>
            <person name="Pohl T.M."/>
            <person name="Eger P."/>
            <person name="Zimmermann W."/>
            <person name="Wedler H."/>
            <person name="Wambutt R."/>
            <person name="Purnelle B."/>
            <person name="Goffeau A."/>
            <person name="Cadieu E."/>
            <person name="Dreano S."/>
            <person name="Gloux S."/>
            <person name="Lelaure V."/>
            <person name="Mottier S."/>
            <person name="Galibert F."/>
            <person name="Aves S.J."/>
            <person name="Xiang Z."/>
            <person name="Hunt C."/>
            <person name="Moore K."/>
            <person name="Hurst S.M."/>
            <person name="Lucas M."/>
            <person name="Rochet M."/>
            <person name="Gaillardin C."/>
            <person name="Tallada V.A."/>
            <person name="Garzon A."/>
            <person name="Thode G."/>
            <person name="Daga R.R."/>
            <person name="Cruzado L."/>
            <person name="Jimenez J."/>
            <person name="Sanchez M."/>
            <person name="del Rey F."/>
            <person name="Benito J."/>
            <person name="Dominguez A."/>
            <person name="Revuelta J.L."/>
            <person name="Moreno S."/>
            <person name="Armstrong J."/>
            <person name="Forsburg S.L."/>
            <person name="Cerutti L."/>
            <person name="Lowe T."/>
            <person name="McCombie W.R."/>
            <person name="Paulsen I."/>
            <person name="Potashkin J."/>
            <person name="Shpakovski G.V."/>
            <person name="Ussery D."/>
            <person name="Barrell B.G."/>
            <person name="Nurse P."/>
        </authorList>
    </citation>
    <scope>NUCLEOTIDE SEQUENCE [LARGE SCALE GENOMIC DNA]</scope>
    <source>
        <strain>972 / ATCC 24843</strain>
    </source>
</reference>
<reference key="3">
    <citation type="journal article" date="2000" name="Mol. Gen. Genet.">
        <title>The Holliday junction resolvase SpCCE1 prevents mitochondrial DNA aggregation in Schizosaccharomyces pombe.</title>
        <authorList>
            <person name="Doe C.L."/>
            <person name="Osman F."/>
            <person name="Dixon J."/>
            <person name="Whitby M.C."/>
        </authorList>
    </citation>
    <scope>GENE NAME</scope>
    <scope>FUNCTION</scope>
    <scope>SUBCELLULAR LOCATION</scope>
</reference>
<reference key="4">
    <citation type="journal article" date="2001" name="EMBO J.">
        <title>Crystal structure of the fission yeast mitochondrial Holliday junction resolvase Ydc2.</title>
        <authorList>
            <person name="Ceschini S."/>
            <person name="Keeley A."/>
            <person name="McAlister M.S.B."/>
            <person name="Oram M."/>
            <person name="Phelan J."/>
            <person name="Pearl L.H."/>
            <person name="Tsaneva I.R."/>
            <person name="Barrett T.E."/>
        </authorList>
    </citation>
    <scope>X-RAY CRYSTALLOGRAPHY (2.3 ANGSTROMS)</scope>
</reference>
<dbReference type="EC" id="3.1.21.10" evidence="4"/>
<dbReference type="EMBL" id="CU329670">
    <property type="protein sequence ID" value="CAA94631.1"/>
    <property type="molecule type" value="Genomic_DNA"/>
</dbReference>
<dbReference type="PIR" id="T38373">
    <property type="entry name" value="T38373"/>
</dbReference>
<dbReference type="RefSeq" id="NP_594522.1">
    <property type="nucleotide sequence ID" value="NM_001019951.2"/>
</dbReference>
<dbReference type="PDB" id="1KCF">
    <property type="method" value="X-ray"/>
    <property type="resolution" value="2.30 A"/>
    <property type="chains" value="A/B=1-258"/>
</dbReference>
<dbReference type="PDBsum" id="1KCF"/>
<dbReference type="SMR" id="Q10423"/>
<dbReference type="BioGRID" id="279186">
    <property type="interactions" value="16"/>
</dbReference>
<dbReference type="FunCoup" id="Q10423">
    <property type="interactions" value="168"/>
</dbReference>
<dbReference type="STRING" id="284812.Q10423"/>
<dbReference type="PaxDb" id="4896-SPAC25G10.02.1"/>
<dbReference type="EnsemblFungi" id="SPAC25G10.02.1">
    <property type="protein sequence ID" value="SPAC25G10.02.1:pep"/>
    <property type="gene ID" value="SPAC25G10.02"/>
</dbReference>
<dbReference type="GeneID" id="2542736"/>
<dbReference type="KEGG" id="spo:2542736"/>
<dbReference type="PomBase" id="SPAC25G10.02">
    <property type="gene designation" value="cce1"/>
</dbReference>
<dbReference type="VEuPathDB" id="FungiDB:SPAC25G10.02"/>
<dbReference type="eggNOG" id="ENOG502S4DK">
    <property type="taxonomic scope" value="Eukaryota"/>
</dbReference>
<dbReference type="HOGENOM" id="CLU_1042654_0_0_1"/>
<dbReference type="InParanoid" id="Q10423"/>
<dbReference type="OMA" id="MAITWIE"/>
<dbReference type="PhylomeDB" id="Q10423"/>
<dbReference type="EvolutionaryTrace" id="Q10423"/>
<dbReference type="PRO" id="PR:Q10423"/>
<dbReference type="Proteomes" id="UP000002485">
    <property type="component" value="Chromosome I"/>
</dbReference>
<dbReference type="GO" id="GO:0005737">
    <property type="term" value="C:cytoplasm"/>
    <property type="evidence" value="ECO:0007005"/>
    <property type="project" value="PomBase"/>
</dbReference>
<dbReference type="GO" id="GO:0005739">
    <property type="term" value="C:mitochondrion"/>
    <property type="evidence" value="ECO:0000314"/>
    <property type="project" value="PomBase"/>
</dbReference>
<dbReference type="GO" id="GO:0000402">
    <property type="term" value="F:crossed form four-way junction DNA binding"/>
    <property type="evidence" value="ECO:0000314"/>
    <property type="project" value="PomBase"/>
</dbReference>
<dbReference type="GO" id="GO:0008821">
    <property type="term" value="F:crossover junction DNA endonuclease activity"/>
    <property type="evidence" value="ECO:0000314"/>
    <property type="project" value="PomBase"/>
</dbReference>
<dbReference type="GO" id="GO:0004520">
    <property type="term" value="F:DNA endonuclease activity"/>
    <property type="evidence" value="ECO:0000318"/>
    <property type="project" value="GO_Central"/>
</dbReference>
<dbReference type="GO" id="GO:0070336">
    <property type="term" value="F:flap-structured DNA binding"/>
    <property type="evidence" value="ECO:0000314"/>
    <property type="project" value="PomBase"/>
</dbReference>
<dbReference type="GO" id="GO:0000400">
    <property type="term" value="F:four-way junction DNA binding"/>
    <property type="evidence" value="ECO:0000314"/>
    <property type="project" value="PomBase"/>
</dbReference>
<dbReference type="GO" id="GO:0046872">
    <property type="term" value="F:metal ion binding"/>
    <property type="evidence" value="ECO:0007669"/>
    <property type="project" value="UniProtKB-KW"/>
</dbReference>
<dbReference type="GO" id="GO:0000403">
    <property type="term" value="F:Y-form DNA binding"/>
    <property type="evidence" value="ECO:0000314"/>
    <property type="project" value="PomBase"/>
</dbReference>
<dbReference type="GO" id="GO:0032042">
    <property type="term" value="P:mitochondrial DNA metabolic process"/>
    <property type="evidence" value="ECO:0000315"/>
    <property type="project" value="PomBase"/>
</dbReference>
<dbReference type="GO" id="GO:0000002">
    <property type="term" value="P:mitochondrial genome maintenance"/>
    <property type="evidence" value="ECO:0000318"/>
    <property type="project" value="GO_Central"/>
</dbReference>
<dbReference type="CDD" id="cd16963">
    <property type="entry name" value="CCE1"/>
    <property type="match status" value="1"/>
</dbReference>
<dbReference type="FunFam" id="3.30.420.10:FF:000160">
    <property type="entry name" value="Cruciform cutting endonuclease"/>
    <property type="match status" value="1"/>
</dbReference>
<dbReference type="Gene3D" id="3.30.420.10">
    <property type="entry name" value="Ribonuclease H-like superfamily/Ribonuclease H"/>
    <property type="match status" value="1"/>
</dbReference>
<dbReference type="InterPro" id="IPR039197">
    <property type="entry name" value="Mrs1/Cce1"/>
</dbReference>
<dbReference type="InterPro" id="IPR012337">
    <property type="entry name" value="RNaseH-like_sf"/>
</dbReference>
<dbReference type="InterPro" id="IPR036397">
    <property type="entry name" value="RNaseH_sf"/>
</dbReference>
<dbReference type="InterPro" id="IPR003034">
    <property type="entry name" value="SAP_dom"/>
</dbReference>
<dbReference type="InterPro" id="IPR036361">
    <property type="entry name" value="SAP_dom_sf"/>
</dbReference>
<dbReference type="InterPro" id="IPR015242">
    <property type="entry name" value="Ydc2_cat"/>
</dbReference>
<dbReference type="PANTHER" id="PTHR28072">
    <property type="entry name" value="CRUCIFORM CUTTING ENDONUCLEASE 1, MITOCHONDRIAL-RELATED"/>
    <property type="match status" value="1"/>
</dbReference>
<dbReference type="PANTHER" id="PTHR28072:SF1">
    <property type="entry name" value="CRUCIFORM CUTTING ENDONUCLEASE 1, MITOCHONDRIAL-RELATED"/>
    <property type="match status" value="1"/>
</dbReference>
<dbReference type="Pfam" id="PF09159">
    <property type="entry name" value="Ydc2-catalyt"/>
    <property type="match status" value="1"/>
</dbReference>
<dbReference type="SMART" id="SM00513">
    <property type="entry name" value="SAP"/>
    <property type="match status" value="1"/>
</dbReference>
<dbReference type="SUPFAM" id="SSF53098">
    <property type="entry name" value="Ribonuclease H-like"/>
    <property type="match status" value="1"/>
</dbReference>
<dbReference type="SUPFAM" id="SSF68906">
    <property type="entry name" value="SAP domain"/>
    <property type="match status" value="1"/>
</dbReference>
<dbReference type="PROSITE" id="PS50800">
    <property type="entry name" value="SAP"/>
    <property type="match status" value="1"/>
</dbReference>
<proteinExistence type="evidence at protein level"/>
<comment type="function">
    <text evidence="3 4">Capable of resolving Holliday junctions. Specific for 4-way junctions. Seems to be important for the maintenance of mitochondrial DNA. Cleaves fixed junctions at the point of strand exchange. Cleaves after 5'-CT-3' and 5'-TT-3' sequences.</text>
</comment>
<comment type="catalytic activity">
    <reaction evidence="4">
        <text>Endonucleolytic cleavage at a junction such as a reciprocal single-stranded crossover between two homologous DNA duplexes (Holliday junction).</text>
        <dbReference type="EC" id="3.1.21.10"/>
    </reaction>
</comment>
<comment type="subunit">
    <text evidence="4">Homodimer.</text>
</comment>
<comment type="subcellular location">
    <subcellularLocation>
        <location evidence="3">Mitochondrion</location>
    </subcellularLocation>
</comment>
<evidence type="ECO:0000255" key="1"/>
<evidence type="ECO:0000255" key="2">
    <source>
        <dbReference type="PROSITE-ProRule" id="PRU00186"/>
    </source>
</evidence>
<evidence type="ECO:0000269" key="3">
    <source>
    </source>
</evidence>
<evidence type="ECO:0000269" key="4">
    <source>
    </source>
</evidence>
<evidence type="ECO:0007829" key="5">
    <source>
        <dbReference type="PDB" id="1KCF"/>
    </source>
</evidence>
<keyword id="KW-0002">3D-structure</keyword>
<keyword id="KW-0255">Endonuclease</keyword>
<keyword id="KW-0378">Hydrolase</keyword>
<keyword id="KW-0460">Magnesium</keyword>
<keyword id="KW-0479">Metal-binding</keyword>
<keyword id="KW-0496">Mitochondrion</keyword>
<keyword id="KW-0540">Nuclease</keyword>
<keyword id="KW-1185">Reference proteome</keyword>
<keyword id="KW-0809">Transit peptide</keyword>
<accession>Q10423</accession>